<sequence>MAWALKLPLADEVIESGLVQDFDASLSGIGQELGAGAYSMSDVLALPIFKQEESSLPSENENKILPFQYVLCTATSPAVKLHEETLTYLNQGQSYEIRMLDNRKMGELPELNGKLVKSIFRVVFHDRRLQYTEHQQLEGWRWNRPGDRILDIDIPMSVGIIDPRANPTQLNTVEFLWDPAKRTSVFIQVHCISTEFTMRKHGGEKGVPFRVQIDTFKENENGEYTEHLHSASCQIKVFKPKGADRKQKTDREKMEKRTPQEKEKYQPSYETTILTECSPWPEITYVSNAPSPGFNSSHNSFPIGEGNGSPNHQPEPPAPIVDVSAGLTPIQNLLPTSTPQEAQQWLHRNRFAAFSRLFTNFSGADLLKLTRDDVIQICGPADGIRLFNALKGRMVRPRLTIYVCQESQQLREQQQQHKHENGEAGNSAFYVYHAIYLEEMTAIELTEKIAQLFSISPHQINQIYKQGPTGIHVLISDEMIQNFQDESCFILDTMKAETNDSYHIILK</sequence>
<name>TFCP2_XENTR</name>
<dbReference type="EMBL" id="BC066130">
    <property type="protein sequence ID" value="AAH66130.1"/>
    <property type="molecule type" value="mRNA"/>
</dbReference>
<dbReference type="RefSeq" id="NP_991396.1">
    <property type="nucleotide sequence ID" value="NM_205827.1"/>
</dbReference>
<dbReference type="SMR" id="Q6NZH6"/>
<dbReference type="FunCoup" id="Q6NZH6">
    <property type="interactions" value="2977"/>
</dbReference>
<dbReference type="GeneID" id="403094"/>
<dbReference type="KEGG" id="xtr:403094"/>
<dbReference type="AGR" id="Xenbase:XB-GENE-485720"/>
<dbReference type="CTD" id="7024"/>
<dbReference type="Xenbase" id="XB-GENE-485720">
    <property type="gene designation" value="tfcp2"/>
</dbReference>
<dbReference type="InParanoid" id="Q6NZH6"/>
<dbReference type="OrthoDB" id="9996779at2759"/>
<dbReference type="Proteomes" id="UP000008143">
    <property type="component" value="Chromosome 2"/>
</dbReference>
<dbReference type="Bgee" id="ENSXETG00000009632">
    <property type="expression patterns" value="Expressed in neurula embryo and 14 other cell types or tissues"/>
</dbReference>
<dbReference type="ExpressionAtlas" id="Q6NZH6">
    <property type="expression patterns" value="baseline"/>
</dbReference>
<dbReference type="GO" id="GO:0005634">
    <property type="term" value="C:nucleus"/>
    <property type="evidence" value="ECO:0007669"/>
    <property type="project" value="UniProtKB-SubCell"/>
</dbReference>
<dbReference type="GO" id="GO:0003677">
    <property type="term" value="F:DNA binding"/>
    <property type="evidence" value="ECO:0007669"/>
    <property type="project" value="UniProtKB-KW"/>
</dbReference>
<dbReference type="GO" id="GO:0001228">
    <property type="term" value="F:DNA-binding transcription activator activity, RNA polymerase II-specific"/>
    <property type="evidence" value="ECO:0007669"/>
    <property type="project" value="InterPro"/>
</dbReference>
<dbReference type="CDD" id="cd09589">
    <property type="entry name" value="SAM_TFCP2"/>
    <property type="match status" value="1"/>
</dbReference>
<dbReference type="FunFam" id="1.10.150.50:FF:000022">
    <property type="entry name" value="Transcription factor CP2 like 1"/>
    <property type="match status" value="1"/>
</dbReference>
<dbReference type="Gene3D" id="1.10.150.50">
    <property type="entry name" value="Transcription Factor, Ets-1"/>
    <property type="match status" value="1"/>
</dbReference>
<dbReference type="InterPro" id="IPR007604">
    <property type="entry name" value="CP2"/>
</dbReference>
<dbReference type="InterPro" id="IPR013761">
    <property type="entry name" value="SAM/pointed_sf"/>
</dbReference>
<dbReference type="InterPro" id="IPR041418">
    <property type="entry name" value="SAM_3"/>
</dbReference>
<dbReference type="InterPro" id="IPR040167">
    <property type="entry name" value="TF_CP2-like"/>
</dbReference>
<dbReference type="InterPro" id="IPR037599">
    <property type="entry name" value="TFCP2_SAM"/>
</dbReference>
<dbReference type="PANTHER" id="PTHR11037:SF11">
    <property type="entry name" value="ALPHA-GLOBIN TRANSCRIPTION FACTOR CP2"/>
    <property type="match status" value="1"/>
</dbReference>
<dbReference type="PANTHER" id="PTHR11037">
    <property type="entry name" value="TRANSCRIPTION FACTOR CP2"/>
    <property type="match status" value="1"/>
</dbReference>
<dbReference type="Pfam" id="PF04516">
    <property type="entry name" value="CP2"/>
    <property type="match status" value="1"/>
</dbReference>
<dbReference type="Pfam" id="PF25416">
    <property type="entry name" value="GRHL1_C"/>
    <property type="match status" value="1"/>
</dbReference>
<dbReference type="Pfam" id="PF18016">
    <property type="entry name" value="SAM_3"/>
    <property type="match status" value="1"/>
</dbReference>
<dbReference type="SUPFAM" id="SSF47769">
    <property type="entry name" value="SAM/Pointed domain"/>
    <property type="match status" value="1"/>
</dbReference>
<dbReference type="PROSITE" id="PS51968">
    <property type="entry name" value="GRH_CP2_DB"/>
    <property type="match status" value="1"/>
</dbReference>
<reference key="1">
    <citation type="submission" date="2004-02" db="EMBL/GenBank/DDBJ databases">
        <authorList>
            <consortium name="NIH - Xenopus Gene Collection (XGC) project"/>
        </authorList>
    </citation>
    <scope>NUCLEOTIDE SEQUENCE [LARGE SCALE MRNA]</scope>
    <source>
        <tissue>Embryo</tissue>
    </source>
</reference>
<gene>
    <name type="primary">tfcp2</name>
</gene>
<organism>
    <name type="scientific">Xenopus tropicalis</name>
    <name type="common">Western clawed frog</name>
    <name type="synonym">Silurana tropicalis</name>
    <dbReference type="NCBI Taxonomy" id="8364"/>
    <lineage>
        <taxon>Eukaryota</taxon>
        <taxon>Metazoa</taxon>
        <taxon>Chordata</taxon>
        <taxon>Craniata</taxon>
        <taxon>Vertebrata</taxon>
        <taxon>Euteleostomi</taxon>
        <taxon>Amphibia</taxon>
        <taxon>Batrachia</taxon>
        <taxon>Anura</taxon>
        <taxon>Pipoidea</taxon>
        <taxon>Pipidae</taxon>
        <taxon>Xenopodinae</taxon>
        <taxon>Xenopus</taxon>
        <taxon>Silurana</taxon>
    </lineage>
</organism>
<feature type="chain" id="PRO_0000228005" description="Transcription factor CP2">
    <location>
        <begin position="1"/>
        <end position="507"/>
    </location>
</feature>
<feature type="domain" description="Grh/CP2 DB" evidence="2">
    <location>
        <begin position="61"/>
        <end position="300"/>
    </location>
</feature>
<feature type="region of interest" description="DNA-binding" evidence="1">
    <location>
        <begin position="133"/>
        <end position="395"/>
    </location>
</feature>
<feature type="region of interest" description="Disordered" evidence="3">
    <location>
        <begin position="240"/>
        <end position="268"/>
    </location>
</feature>
<feature type="region of interest" description="Disordered" evidence="3">
    <location>
        <begin position="296"/>
        <end position="316"/>
    </location>
</feature>
<feature type="compositionally biased region" description="Basic and acidic residues" evidence="3">
    <location>
        <begin position="241"/>
        <end position="265"/>
    </location>
</feature>
<evidence type="ECO:0000250" key="1"/>
<evidence type="ECO:0000255" key="2">
    <source>
        <dbReference type="PROSITE-ProRule" id="PRU01313"/>
    </source>
</evidence>
<evidence type="ECO:0000256" key="3">
    <source>
        <dbReference type="SAM" id="MobiDB-lite"/>
    </source>
</evidence>
<evidence type="ECO:0000305" key="4"/>
<comment type="function">
    <text>May function as a transcription factor.</text>
</comment>
<comment type="subunit">
    <text evidence="1">Component of the SSP (stage selector protein) complex, which appears to be a heteromer of TFCP2 and 2 copies of NFE4.</text>
</comment>
<comment type="subcellular location">
    <subcellularLocation>
        <location evidence="1">Nucleus</location>
    </subcellularLocation>
</comment>
<comment type="similarity">
    <text evidence="4">Belongs to the grh/CP2 family. CP2 subfamily.</text>
</comment>
<accession>Q6NZH6</accession>
<protein>
    <recommendedName>
        <fullName>Transcription factor CP2</fullName>
    </recommendedName>
</protein>
<keyword id="KW-0238">DNA-binding</keyword>
<keyword id="KW-0539">Nucleus</keyword>
<keyword id="KW-1185">Reference proteome</keyword>
<keyword id="KW-0804">Transcription</keyword>
<keyword id="KW-0805">Transcription regulation</keyword>
<proteinExistence type="evidence at transcript level"/>